<protein>
    <recommendedName>
        <fullName>Autophagy-related protein 2</fullName>
    </recommendedName>
</protein>
<feature type="chain" id="PRO_0000317812" description="Autophagy-related protein 2">
    <location>
        <begin position="1"/>
        <end position="1848"/>
    </location>
</feature>
<feature type="region of interest" description="Disordered" evidence="3">
    <location>
        <begin position="129"/>
        <end position="168"/>
    </location>
</feature>
<feature type="region of interest" description="Disordered" evidence="3">
    <location>
        <begin position="237"/>
        <end position="274"/>
    </location>
</feature>
<feature type="region of interest" description="Disordered" evidence="3">
    <location>
        <begin position="386"/>
        <end position="417"/>
    </location>
</feature>
<feature type="region of interest" description="Disordered" evidence="3">
    <location>
        <begin position="494"/>
        <end position="540"/>
    </location>
</feature>
<feature type="region of interest" description="Disordered" evidence="3">
    <location>
        <begin position="1717"/>
        <end position="1737"/>
    </location>
</feature>
<feature type="compositionally biased region" description="Acidic residues" evidence="3">
    <location>
        <begin position="132"/>
        <end position="146"/>
    </location>
</feature>
<feature type="compositionally biased region" description="Low complexity" evidence="3">
    <location>
        <begin position="154"/>
        <end position="168"/>
    </location>
</feature>
<feature type="compositionally biased region" description="Acidic residues" evidence="3">
    <location>
        <begin position="254"/>
        <end position="274"/>
    </location>
</feature>
<feature type="compositionally biased region" description="Polar residues" evidence="3">
    <location>
        <begin position="494"/>
        <end position="507"/>
    </location>
</feature>
<feature type="compositionally biased region" description="Low complexity" evidence="3">
    <location>
        <begin position="525"/>
        <end position="540"/>
    </location>
</feature>
<feature type="compositionally biased region" description="Acidic residues" evidence="3">
    <location>
        <begin position="1725"/>
        <end position="1737"/>
    </location>
</feature>
<organism>
    <name type="scientific">Scheffersomyces stipitis (strain ATCC 58785 / CBS 6054 / NBRC 10063 / NRRL Y-11545)</name>
    <name type="common">Yeast</name>
    <name type="synonym">Pichia stipitis</name>
    <dbReference type="NCBI Taxonomy" id="322104"/>
    <lineage>
        <taxon>Eukaryota</taxon>
        <taxon>Fungi</taxon>
        <taxon>Dikarya</taxon>
        <taxon>Ascomycota</taxon>
        <taxon>Saccharomycotina</taxon>
        <taxon>Pichiomycetes</taxon>
        <taxon>Debaryomycetaceae</taxon>
        <taxon>Scheffersomyces</taxon>
    </lineage>
</organism>
<accession>A3LT28</accession>
<evidence type="ECO:0000250" key="1">
    <source>
        <dbReference type="UniProtKB" id="O94649"/>
    </source>
</evidence>
<evidence type="ECO:0000250" key="2">
    <source>
        <dbReference type="UniProtKB" id="P53855"/>
    </source>
</evidence>
<evidence type="ECO:0000256" key="3">
    <source>
        <dbReference type="SAM" id="MobiDB-lite"/>
    </source>
</evidence>
<evidence type="ECO:0000305" key="4"/>
<sequence length="1848" mass="206433">MSPQWMPQNIQKRLLLYVLQQLSLFSEIDLPNLEEVSLNNIVLRDISIDPEKVGKLPGCNLRFGQVGTLELNTVTGGTIIGGGGGVNVDARDVEVVISPDFDINEEVRKEVQFSLAQSTADLAKTIIKDSDSAAEDESDDTDEEIVVEPKKSRSSSSSSFSGSTSKPSALSAVMSRAVEMALSRLQIKITNMKIKLVSEMTDLLFEVDEVLINTVNGTRVVKITGVRSMTLKPNVNPGELVEKVVQSPQKDDTSDNEEDDSNYEDDNNDYGDESLMDSMVFTHEEASSIYLSATSQSFPRPTSYNVDEGEVHVGNESVSSDPPAIFHMDYCDVEFDGLSNVSNLKIDIGTIKVATTPLAPTIISILNGITRSLKIKNHQKWTQQALKRQQNSRFPQYAETTDELTDDEASSKDGENTDPFFNKLHIRDIIISTTSALSRDGVFASPDNSINFVLHNSNIKQKNDMLIYGGVETFRIEQVKEGVTTDIFTFESPTAATHAEQSQSQPDSEGVSFAHGSPPPPIRPMSPSSISSMSSSGSKSSTLKADLRFEIFKKLEENVVTIETTALLSKTALLTLDLNSSLILSNFITAMNSIHSNFKVLMATIENLSKQQSPKKQKTHTNAAEAMTTKTQFILQTSPIIMSVKFTQDLLVKAIIFPISYNLQQNQLSISKILINTTIRNERESTTITISNIVLLTKLHEFKSFIKRIANPSNANPIPREVQVTASSNLFISKIMVNIALKELKFVISNIVSFYDSFASLSAKQSNSLENSVLDFVRDRSHKLEISSILQPPGQSRRRIGPGFASPHLSNPTFVNISRNNIASFRCSIKEVELNLVQVLPKFGGLTLRLKDILLYEQKNDINGSILSFDIVRVDDGQLQKFVYEFQELPLESIRLPLIMIHCKNTEKISTVDVVIRNVLVEYYTQWLLLLDDFEANEEKLAELVVEKVKPVNPSSSQNRFDIRFSVFDCIIGLNPGRLPCKSYLVVGRGTSDFTFGVNQFYIKSSFRDVSALLIDDVKNKEKMPLKDNSTSRSRKSLPTSSYTSPLTFFSNLGYIMIGGLNVVHIGITFNTNIEEVMKRNEKLGISDNLSLIDLKINSDEHHLELCADSTHVLLQLINDLKLPLNFKDDEKMKVTVDSSINLMDDLDENQFQLKKRNISVAPGVETSSSSAGSENENLETIAFDEDHFSKARNKIPKGSKVDPFKLNINLSKTKIYLYDGYDWKDTRKAVRGAVKRVEAQAMKERLKKLKKQTDKDDYDEEDEFIEETLFSSIHVGIPRDATDANLTDRINKRVQSSLQETDMTPEEAQKAQINVELGKNYKNLKLRRSRVHKIMADFTNIEVNVSVYSTRDPRKDPTDENLPYELLNDVEVRLGTADVYDNVATSTWNKLLTYMNTSGEGEIGKSMLKLAITNVRPSPKLVSSEAIMKVQVLPVRLHIDQDTLDFLMRFLEFKDSRFSLPLDEIVYIQKFQISPVMLKLDYKPKRVDYVGIRSGNSAEFMNFFILDGSTINLAEATVYGLLGMPSLGKALGEVWGPQIQQTQIAGILAGLAPIRSIVNIGGGVKDLIAIPISEYKKDGRLFRSIQKGTQKFAKTTGYEILNLGVKLASGTQVILEQGEQLLGGEGSGARLPASRGSNSQKCNVNKRSSYKVAAKVDFNKLLANSQVLNQSVRVDRDQYANKKFYSYIDIDEDDDELVTGIDKELLSKSIFLLPRDDNSKKEGEEDEADDSSADEEGEKLISLYSNQPENIQEGMKLAYKSFGNNLKITKRQLINLKNELNESENIQDSLKSILKSSPIIFIRPIIGSTEALSKALMGLGNEIDSKRIVESRDKYRYIKRAKDEDVL</sequence>
<proteinExistence type="inferred from homology"/>
<gene>
    <name type="primary">ATG2</name>
    <name type="ORF">PICST_45331</name>
</gene>
<comment type="function">
    <text evidence="2">Lipid transfer protein required for autophagosome completion and peroxisome degradation. Tethers the edge of the isolation membrane (IM) to the endoplasmic reticulum (ER) and mediates direct lipid transfer from ER to IM for IM expansion. ATG2 binds to the ER exit site (ERES), which is the membrane source for autophagosome formation, using basic residues in its N-terminal region (NR) and to the expanding edge of the IM through its C-terminal region. The latter binding is assisted by an ATG18-PtdIns3P interaction. ATG2 then extracts phospholipids from the membrane source using its NR and transfers them to ATG9 to the IM through its predicted beta-sheet-rich structure for membrane expansion.</text>
</comment>
<comment type="catalytic activity">
    <reaction evidence="1">
        <text>a 1,2-diacyl-sn-glycero-3-phosphocholine(in) = a 1,2-diacyl-sn-glycero-3-phosphocholine(out)</text>
        <dbReference type="Rhea" id="RHEA:38571"/>
        <dbReference type="ChEBI" id="CHEBI:57643"/>
    </reaction>
</comment>
<comment type="catalytic activity">
    <reaction evidence="1">
        <text>a 1,2-diacyl-sn-glycero-3-phospho-L-serine(in) = a 1,2-diacyl-sn-glycero-3-phospho-L-serine(out)</text>
        <dbReference type="Rhea" id="RHEA:38663"/>
        <dbReference type="ChEBI" id="CHEBI:57262"/>
    </reaction>
</comment>
<comment type="catalytic activity">
    <reaction evidence="1">
        <text>a 1,2-diacyl-sn-glycero-3-phosphoethanolamine(in) = a 1,2-diacyl-sn-glycero-3-phosphoethanolamine(out)</text>
        <dbReference type="Rhea" id="RHEA:38895"/>
        <dbReference type="ChEBI" id="CHEBI:64612"/>
    </reaction>
</comment>
<comment type="subcellular location">
    <subcellularLocation>
        <location evidence="2">Preautophagosomal structure membrane</location>
        <topology evidence="2">Peripheral membrane protein</topology>
    </subcellularLocation>
    <subcellularLocation>
        <location evidence="2">Endoplasmic reticulum membrane</location>
        <topology evidence="2">Peripheral membrane protein</topology>
    </subcellularLocation>
</comment>
<comment type="similarity">
    <text evidence="4">Belongs to the ATG2 family.</text>
</comment>
<name>ATG2_PICST</name>
<dbReference type="EMBL" id="CP000498">
    <property type="protein sequence ID" value="ABN66339.2"/>
    <property type="molecule type" value="Genomic_DNA"/>
</dbReference>
<dbReference type="RefSeq" id="XP_001384368.2">
    <property type="nucleotide sequence ID" value="XM_001384331.1"/>
</dbReference>
<dbReference type="SMR" id="A3LT28"/>
<dbReference type="FunCoup" id="A3LT28">
    <property type="interactions" value="48"/>
</dbReference>
<dbReference type="STRING" id="322104.A3LT28"/>
<dbReference type="GeneID" id="4838982"/>
<dbReference type="KEGG" id="pic:PICST_45331"/>
<dbReference type="eggNOG" id="KOG2993">
    <property type="taxonomic scope" value="Eukaryota"/>
</dbReference>
<dbReference type="HOGENOM" id="CLU_000626_3_0_1"/>
<dbReference type="InParanoid" id="A3LT28"/>
<dbReference type="OMA" id="YDWKYTR"/>
<dbReference type="OrthoDB" id="18982at2759"/>
<dbReference type="Proteomes" id="UP000002258">
    <property type="component" value="Chromosome 4"/>
</dbReference>
<dbReference type="GO" id="GO:0005789">
    <property type="term" value="C:endoplasmic reticulum membrane"/>
    <property type="evidence" value="ECO:0007669"/>
    <property type="project" value="UniProtKB-SubCell"/>
</dbReference>
<dbReference type="GO" id="GO:0061908">
    <property type="term" value="C:phagophore"/>
    <property type="evidence" value="ECO:0007669"/>
    <property type="project" value="TreeGrafter"/>
</dbReference>
<dbReference type="GO" id="GO:0034045">
    <property type="term" value="C:phagophore assembly site membrane"/>
    <property type="evidence" value="ECO:0007669"/>
    <property type="project" value="UniProtKB-SubCell"/>
</dbReference>
<dbReference type="GO" id="GO:0032266">
    <property type="term" value="F:phosphatidylinositol-3-phosphate binding"/>
    <property type="evidence" value="ECO:0007669"/>
    <property type="project" value="TreeGrafter"/>
</dbReference>
<dbReference type="GO" id="GO:0043495">
    <property type="term" value="F:protein-membrane adaptor activity"/>
    <property type="evidence" value="ECO:0007669"/>
    <property type="project" value="TreeGrafter"/>
</dbReference>
<dbReference type="GO" id="GO:0000045">
    <property type="term" value="P:autophagosome assembly"/>
    <property type="evidence" value="ECO:0007669"/>
    <property type="project" value="TreeGrafter"/>
</dbReference>
<dbReference type="GO" id="GO:0000422">
    <property type="term" value="P:autophagy of mitochondrion"/>
    <property type="evidence" value="ECO:0007669"/>
    <property type="project" value="TreeGrafter"/>
</dbReference>
<dbReference type="GO" id="GO:0061723">
    <property type="term" value="P:glycophagy"/>
    <property type="evidence" value="ECO:0007669"/>
    <property type="project" value="TreeGrafter"/>
</dbReference>
<dbReference type="GO" id="GO:0006869">
    <property type="term" value="P:lipid transport"/>
    <property type="evidence" value="ECO:0007669"/>
    <property type="project" value="UniProtKB-KW"/>
</dbReference>
<dbReference type="GO" id="GO:0034727">
    <property type="term" value="P:piecemeal microautophagy of the nucleus"/>
    <property type="evidence" value="ECO:0007669"/>
    <property type="project" value="TreeGrafter"/>
</dbReference>
<dbReference type="GO" id="GO:0015031">
    <property type="term" value="P:protein transport"/>
    <property type="evidence" value="ECO:0007669"/>
    <property type="project" value="UniProtKB-KW"/>
</dbReference>
<dbReference type="GO" id="GO:0061709">
    <property type="term" value="P:reticulophagy"/>
    <property type="evidence" value="ECO:0007669"/>
    <property type="project" value="TreeGrafter"/>
</dbReference>
<dbReference type="InterPro" id="IPR026849">
    <property type="entry name" value="ATG2"/>
</dbReference>
<dbReference type="PANTHER" id="PTHR13190">
    <property type="entry name" value="AUTOPHAGY-RELATED 2, ISOFORM A"/>
    <property type="match status" value="1"/>
</dbReference>
<dbReference type="PANTHER" id="PTHR13190:SF1">
    <property type="entry name" value="AUTOPHAGY-RELATED 2, ISOFORM A"/>
    <property type="match status" value="1"/>
</dbReference>
<dbReference type="Pfam" id="PF13329">
    <property type="entry name" value="ATG2_CAD"/>
    <property type="match status" value="1"/>
</dbReference>
<keyword id="KW-0072">Autophagy</keyword>
<keyword id="KW-0256">Endoplasmic reticulum</keyword>
<keyword id="KW-0445">Lipid transport</keyword>
<keyword id="KW-0472">Membrane</keyword>
<keyword id="KW-0653">Protein transport</keyword>
<keyword id="KW-1185">Reference proteome</keyword>
<keyword id="KW-0813">Transport</keyword>
<reference key="1">
    <citation type="journal article" date="2007" name="Nat. Biotechnol.">
        <title>Genome sequence of the lignocellulose-bioconverting and xylose-fermenting yeast Pichia stipitis.</title>
        <authorList>
            <person name="Jeffries T.W."/>
            <person name="Grigoriev I.V."/>
            <person name="Grimwood J."/>
            <person name="Laplaza J.M."/>
            <person name="Aerts A."/>
            <person name="Salamov A."/>
            <person name="Schmutz J."/>
            <person name="Lindquist E."/>
            <person name="Dehal P."/>
            <person name="Shapiro H."/>
            <person name="Jin Y.-S."/>
            <person name="Passoth V."/>
            <person name="Richardson P.M."/>
        </authorList>
    </citation>
    <scope>NUCLEOTIDE SEQUENCE [LARGE SCALE GENOMIC DNA]</scope>
    <source>
        <strain>ATCC 58785 / CBS 6054 / NBRC 10063 / NRRL Y-11545</strain>
    </source>
</reference>